<proteinExistence type="inferred from homology"/>
<comment type="function">
    <text evidence="2 5">Terpene cyclase; part of the gene cluster that mediates the biosynthesis of 15-deoxyoxalicine B (PubMed:30090271). The first step of the pathway is the synthesis of nicotinyl-CoA from nicotinic acid by the nicotinic acid-CoA ligase olcI (PubMed:30090271). Nicotinyl-CoA is then a substrate of polyketide synthase olcA to produce 4-hydroxy-6-(3-pyridinyl)-2H-pyran-2-one (HPPO) which is further prenylated by the polyprenyl transferase olcH to yield geranylgeranyl-HPPO (PubMed:30090271). Geranylgeranyl pyrophosphate is provided by the cluster-specific geranylgeranyl pyrophosphate synthase olcC (PubMed:30090271). The FAD-dependent monooxygenase olcE catalyzes the epoxidation of geranylgeranyl-HPPO and the terpene cyclase olcD catalyzes the cyclization of the terpenoid component, resulting in the formation of the tricyclic terpene moiety seen in predecaturin E (PubMed:30090271). The cytochrome P450 monooxygenase then catalyzes the allylic oxidation of predecaturin E, which is followed by spirocylization with concomitant loss of one molecule of water to form decaturin E (PubMed:30090271). Decaturin E is the substrate of the cytochrome P450 monooxygenase olcJ which hydroxylates it at the C-29 position to form decaturin F (PubMed:30090271). The short-chain dehydrogenase/reductase olcF may catalyze the oxidation of decaturin F to generate the 29-hydroxyl-27-one intermediate, and subsequent hemiacetal formation probably leads to the formation of decaturin C (Probable). The dioxygenase olcK may be a peroxisomal enzyme that catalyzes the hydroxylation of decaturin C into decaturin A once decaturin C is shuttled into the peroxisome by the MFS transporter olcL (Probable). Finally the cytochrome P450 monooxygenase olcB catalyzes the oxidative rearrangement to yield 15-deoxyoxalicine B (PubMed:30090271). In the absence of olcJ, decaturin E may be shunted to a pathway in which it is oxidized to a ketone, possibly by olcF, to form decaturin D, which undergoes further allylic oxidation to yield decaturin G (PubMed:30090271). Moreover, in the absence of oclK or oclL, oclB can convert decaturin C into 15-deoxyoxalicine A (PubMed:30090271).</text>
</comment>
<comment type="pathway">
    <text evidence="2">Secondary metabolite biosynthesis; terpenoid biosynthesis.</text>
</comment>
<comment type="subcellular location">
    <subcellularLocation>
        <location evidence="1">Membrane</location>
        <topology evidence="1">Multi-pass membrane protein</topology>
    </subcellularLocation>
</comment>
<comment type="disruption phenotype">
    <text evidence="2">Abolishes the production of 15-deoxyoxalicine B.</text>
</comment>
<comment type="miscellaneous">
    <text evidence="2">The 15-deoxyoxalicine B cluster is a rare cluster that contains its own geranylgeranyl pyrophosphate synthase (olcC), in contrast to other related clusters which rely on a FPP/GGPP synthase localized outside of the cluster.</text>
</comment>
<comment type="similarity">
    <text evidence="4">Belongs to the paxB family.</text>
</comment>
<reference key="1">
    <citation type="journal article" date="2015" name="Chem. Sci.">
        <title>Genome mining and molecular characterization of the biosynthetic gene cluster of a diterpenic meroterpenoid, 15-deoxyoxalicine B, in Penicillium canescens.</title>
        <authorList>
            <person name="Yaegashi J."/>
            <person name="Romsdahl J."/>
            <person name="Chiang Y.M."/>
            <person name="Wang C.C.C."/>
        </authorList>
    </citation>
    <scope>FUNCTION</scope>
    <scope>DISRUPTION PHENOTYPE</scope>
    <scope>PATHWAY</scope>
</reference>
<reference key="2">
    <citation type="journal article" date="2016" name="Chem. Sci.">
        <title>Correction: Genome mining and molecular characterization of the biosynthetic gene cluster of a diterpenic meroterpenoid, 15-deoxyoxalicine B, in Penicillium canescens.</title>
        <authorList>
            <person name="Yaegashi J."/>
            <person name="Romsdahl J."/>
            <person name="Chiang Y.M."/>
            <person name="Wang C.C.C."/>
        </authorList>
    </citation>
    <scope>ERRATUM OF PUBMED:30090271</scope>
</reference>
<protein>
    <recommendedName>
        <fullName evidence="3">Terpene cyclase olcD</fullName>
        <ecNumber evidence="2">4.2.3.-</ecNumber>
    </recommendedName>
    <alternativeName>
        <fullName evidence="3">15-deoxyoxalicine B biosynthesis cluster protein D</fullName>
    </alternativeName>
</protein>
<organism>
    <name type="scientific">Penicillium canescens</name>
    <dbReference type="NCBI Taxonomy" id="5083"/>
    <lineage>
        <taxon>Eukaryota</taxon>
        <taxon>Fungi</taxon>
        <taxon>Dikarya</taxon>
        <taxon>Ascomycota</taxon>
        <taxon>Pezizomycotina</taxon>
        <taxon>Eurotiomycetes</taxon>
        <taxon>Eurotiomycetidae</taxon>
        <taxon>Eurotiales</taxon>
        <taxon>Aspergillaceae</taxon>
        <taxon>Penicillium</taxon>
    </lineage>
</organism>
<keyword id="KW-0456">Lyase</keyword>
<keyword id="KW-0472">Membrane</keyword>
<keyword id="KW-0812">Transmembrane</keyword>
<keyword id="KW-1133">Transmembrane helix</keyword>
<gene>
    <name evidence="3" type="primary">olcD</name>
</gene>
<dbReference type="EC" id="4.2.3.-" evidence="2"/>
<dbReference type="UniPathway" id="UPA00213"/>
<dbReference type="GO" id="GO:0016020">
    <property type="term" value="C:membrane"/>
    <property type="evidence" value="ECO:0007669"/>
    <property type="project" value="UniProtKB-SubCell"/>
</dbReference>
<dbReference type="GO" id="GO:0016829">
    <property type="term" value="F:lyase activity"/>
    <property type="evidence" value="ECO:0007669"/>
    <property type="project" value="UniProtKB-KW"/>
</dbReference>
<dbReference type="GO" id="GO:0016114">
    <property type="term" value="P:terpenoid biosynthetic process"/>
    <property type="evidence" value="ECO:0007669"/>
    <property type="project" value="UniProtKB-UniPathway"/>
</dbReference>
<dbReference type="InterPro" id="IPR039020">
    <property type="entry name" value="PaxB-like"/>
</dbReference>
<dbReference type="PANTHER" id="PTHR42038">
    <property type="match status" value="1"/>
</dbReference>
<dbReference type="PANTHER" id="PTHR42038:SF3">
    <property type="entry name" value="INTEGRAL MEMBRANE PROTEIN (AFU_ORTHOLOGUE AFUA_5G14600)"/>
    <property type="match status" value="1"/>
</dbReference>
<dbReference type="Pfam" id="PF25129">
    <property type="entry name" value="Pyr4-TMTC"/>
    <property type="match status" value="1"/>
</dbReference>
<sequence length="241" mass="27028">MESLDFTKAPPEFQEVKYLSDILLVTLASGWLVCYFATIRTAFCDRACWMPLLPLSCNVAWELVFITLYPPPGSPILGFWLLVNLGVIYSALRFAPSKASHLAVEKHYLPVLFVLAVGFWAWGHLALIEQLNPLPAFYYGGMACQLMTSAAALSGLVDQGSTQGASYTIWLSRVIGTSSALAGLFFRAHYWPSLWAWADNELMRWLAAAFGILDGVYGVQFWRLRRSENQLTIDHAHRKTE</sequence>
<name>OLCD_PENCN</name>
<evidence type="ECO:0000255" key="1"/>
<evidence type="ECO:0000269" key="2">
    <source>
    </source>
</evidence>
<evidence type="ECO:0000303" key="3">
    <source>
    </source>
</evidence>
<evidence type="ECO:0000305" key="4"/>
<evidence type="ECO:0000305" key="5">
    <source>
    </source>
</evidence>
<accession>P9WEQ3</accession>
<feature type="chain" id="PRO_0000453890" description="Terpene cyclase olcD">
    <location>
        <begin position="1"/>
        <end position="241"/>
    </location>
</feature>
<feature type="transmembrane region" description="Helical" evidence="1">
    <location>
        <begin position="19"/>
        <end position="39"/>
    </location>
</feature>
<feature type="transmembrane region" description="Helical" evidence="1">
    <location>
        <begin position="49"/>
        <end position="71"/>
    </location>
</feature>
<feature type="transmembrane region" description="Helical" evidence="1">
    <location>
        <begin position="76"/>
        <end position="95"/>
    </location>
</feature>
<feature type="transmembrane region" description="Helical" evidence="1">
    <location>
        <begin position="108"/>
        <end position="128"/>
    </location>
</feature>
<feature type="transmembrane region" description="Helical" evidence="1">
    <location>
        <begin position="137"/>
        <end position="157"/>
    </location>
</feature>
<feature type="transmembrane region" description="Helical" evidence="1">
    <location>
        <begin position="166"/>
        <end position="186"/>
    </location>
</feature>
<feature type="transmembrane region" description="Helical" evidence="1">
    <location>
        <begin position="202"/>
        <end position="222"/>
    </location>
</feature>